<proteinExistence type="inferred from homology"/>
<sequence length="242" mass="26484">MHQLSTSICLCFVISSPYVYLVSIACVLWTSIPFTSGMMDHSAMHHSGMDMDHGHGDMDMGGQCNMNMLFTWSTKDLCIVFSQWHITGPFSLLMSLIVIVLLTAGYEGVRQATRKYEAAQAQRLNVFSTTTATIARLKPSLTNGVQGNEFADESATTNVPSSQTPNESSPLVAGRDNRRAVEQRGKIILAALYAVQVFYSFFIMLLFMTYNGFVMLAVAVGAFAGYLVFGDNQSAAKTVACH</sequence>
<gene>
    <name evidence="4" type="primary">ctrB</name>
    <name type="ORF">AFUA_3G08180</name>
</gene>
<reference key="1">
    <citation type="journal article" date="2005" name="Nature">
        <title>Genomic sequence of the pathogenic and allergenic filamentous fungus Aspergillus fumigatus.</title>
        <authorList>
            <person name="Nierman W.C."/>
            <person name="Pain A."/>
            <person name="Anderson M.J."/>
            <person name="Wortman J.R."/>
            <person name="Kim H.S."/>
            <person name="Arroyo J."/>
            <person name="Berriman M."/>
            <person name="Abe K."/>
            <person name="Archer D.B."/>
            <person name="Bermejo C."/>
            <person name="Bennett J.W."/>
            <person name="Bowyer P."/>
            <person name="Chen D."/>
            <person name="Collins M."/>
            <person name="Coulsen R."/>
            <person name="Davies R."/>
            <person name="Dyer P.S."/>
            <person name="Farman M.L."/>
            <person name="Fedorova N."/>
            <person name="Fedorova N.D."/>
            <person name="Feldblyum T.V."/>
            <person name="Fischer R."/>
            <person name="Fosker N."/>
            <person name="Fraser A."/>
            <person name="Garcia J.L."/>
            <person name="Garcia M.J."/>
            <person name="Goble A."/>
            <person name="Goldman G.H."/>
            <person name="Gomi K."/>
            <person name="Griffith-Jones S."/>
            <person name="Gwilliam R."/>
            <person name="Haas B.J."/>
            <person name="Haas H."/>
            <person name="Harris D.E."/>
            <person name="Horiuchi H."/>
            <person name="Huang J."/>
            <person name="Humphray S."/>
            <person name="Jimenez J."/>
            <person name="Keller N."/>
            <person name="Khouri H."/>
            <person name="Kitamoto K."/>
            <person name="Kobayashi T."/>
            <person name="Konzack S."/>
            <person name="Kulkarni R."/>
            <person name="Kumagai T."/>
            <person name="Lafton A."/>
            <person name="Latge J.-P."/>
            <person name="Li W."/>
            <person name="Lord A."/>
            <person name="Lu C."/>
            <person name="Majoros W.H."/>
            <person name="May G.S."/>
            <person name="Miller B.L."/>
            <person name="Mohamoud Y."/>
            <person name="Molina M."/>
            <person name="Monod M."/>
            <person name="Mouyna I."/>
            <person name="Mulligan S."/>
            <person name="Murphy L.D."/>
            <person name="O'Neil S."/>
            <person name="Paulsen I."/>
            <person name="Penalva M.A."/>
            <person name="Pertea M."/>
            <person name="Price C."/>
            <person name="Pritchard B.L."/>
            <person name="Quail M.A."/>
            <person name="Rabbinowitsch E."/>
            <person name="Rawlins N."/>
            <person name="Rajandream M.A."/>
            <person name="Reichard U."/>
            <person name="Renauld H."/>
            <person name="Robson G.D."/>
            <person name="Rodriguez de Cordoba S."/>
            <person name="Rodriguez-Pena J.M."/>
            <person name="Ronning C.M."/>
            <person name="Rutter S."/>
            <person name="Salzberg S.L."/>
            <person name="Sanchez M."/>
            <person name="Sanchez-Ferrero J.C."/>
            <person name="Saunders D."/>
            <person name="Seeger K."/>
            <person name="Squares R."/>
            <person name="Squares S."/>
            <person name="Takeuchi M."/>
            <person name="Tekaia F."/>
            <person name="Turner G."/>
            <person name="Vazquez de Aldana C.R."/>
            <person name="Weidman J."/>
            <person name="White O."/>
            <person name="Woodward J.R."/>
            <person name="Yu J.-H."/>
            <person name="Fraser C.M."/>
            <person name="Galagan J.E."/>
            <person name="Asai K."/>
            <person name="Machida M."/>
            <person name="Hall N."/>
            <person name="Barrell B.G."/>
            <person name="Denning D.W."/>
        </authorList>
    </citation>
    <scope>NUCLEOTIDE SEQUENCE [LARGE SCALE GENOMIC DNA]</scope>
    <source>
        <strain>ATCC MYA-4609 / CBS 101355 / FGSC A1100 / Af293</strain>
    </source>
</reference>
<reference key="2">
    <citation type="journal article" date="2014" name="Fungal Genet. Biol.">
        <title>Identification of high-affinity copper transporters in Aspergillus fumigatus.</title>
        <authorList>
            <person name="Park Y.S."/>
            <person name="Lian H."/>
            <person name="Chang M."/>
            <person name="Kang C.M."/>
            <person name="Yun C.W."/>
        </authorList>
    </citation>
    <scope>IDENTIFICATION</scope>
    <scope>FUNCTION</scope>
</reference>
<accession>Q4WX45</accession>
<feature type="chain" id="PRO_0000457376" description="Copper transport protein B">
    <location>
        <begin position="1"/>
        <end position="242"/>
    </location>
</feature>
<feature type="transmembrane region" description="Helical" evidence="1">
    <location>
        <begin position="8"/>
        <end position="28"/>
    </location>
</feature>
<feature type="transmembrane region" description="Helical" evidence="1">
    <location>
        <begin position="86"/>
        <end position="106"/>
    </location>
</feature>
<feature type="transmembrane region" description="Helical" evidence="1">
    <location>
        <begin position="187"/>
        <end position="207"/>
    </location>
</feature>
<feature type="transmembrane region" description="Helical" evidence="1">
    <location>
        <begin position="210"/>
        <end position="230"/>
    </location>
</feature>
<feature type="region of interest" description="Disordered" evidence="2">
    <location>
        <begin position="153"/>
        <end position="175"/>
    </location>
</feature>
<feature type="compositionally biased region" description="Polar residues" evidence="2">
    <location>
        <begin position="154"/>
        <end position="169"/>
    </location>
</feature>
<protein>
    <recommendedName>
        <fullName evidence="4">Copper transport protein B</fullName>
    </recommendedName>
</protein>
<comment type="function">
    <text evidence="3">Transporter that is probably involved in the transport of copper, even if it does not act as a major copper transporter.</text>
</comment>
<comment type="subcellular location">
    <subcellularLocation>
        <location evidence="1">Membrane</location>
        <topology evidence="1">Multi-pass membrane protein</topology>
    </subcellularLocation>
</comment>
<comment type="similarity">
    <text evidence="5">Belongs to the copper transporter (Ctr) (TC 1.A.56) family. SLC31A subfamily.</text>
</comment>
<organism>
    <name type="scientific">Aspergillus fumigatus (strain ATCC MYA-4609 / CBS 101355 / FGSC A1100 / Af293)</name>
    <name type="common">Neosartorya fumigata</name>
    <dbReference type="NCBI Taxonomy" id="330879"/>
    <lineage>
        <taxon>Eukaryota</taxon>
        <taxon>Fungi</taxon>
        <taxon>Dikarya</taxon>
        <taxon>Ascomycota</taxon>
        <taxon>Pezizomycotina</taxon>
        <taxon>Eurotiomycetes</taxon>
        <taxon>Eurotiomycetidae</taxon>
        <taxon>Eurotiales</taxon>
        <taxon>Aspergillaceae</taxon>
        <taxon>Aspergillus</taxon>
        <taxon>Aspergillus subgen. Fumigati</taxon>
    </lineage>
</organism>
<name>CTRB_ASPFU</name>
<dbReference type="EMBL" id="AAHF01000002">
    <property type="protein sequence ID" value="EAL92758.1"/>
    <property type="molecule type" value="Genomic_DNA"/>
</dbReference>
<dbReference type="RefSeq" id="XP_754796.1">
    <property type="nucleotide sequence ID" value="XM_749703.1"/>
</dbReference>
<dbReference type="SMR" id="Q4WX45"/>
<dbReference type="FunCoup" id="Q4WX45">
    <property type="interactions" value="525"/>
</dbReference>
<dbReference type="STRING" id="330879.Q4WX45"/>
<dbReference type="TCDB" id="1.A.56.1.18">
    <property type="family name" value="the copper transporter (ctr) family"/>
</dbReference>
<dbReference type="EnsemblFungi" id="EAL92758">
    <property type="protein sequence ID" value="EAL92758"/>
    <property type="gene ID" value="AFUA_3G08180"/>
</dbReference>
<dbReference type="GeneID" id="3512234"/>
<dbReference type="KEGG" id="afm:AFUA_3G08180"/>
<dbReference type="VEuPathDB" id="FungiDB:Afu3g08180"/>
<dbReference type="eggNOG" id="KOG3386">
    <property type="taxonomic scope" value="Eukaryota"/>
</dbReference>
<dbReference type="HOGENOM" id="CLU_079690_4_0_1"/>
<dbReference type="InParanoid" id="Q4WX45"/>
<dbReference type="OMA" id="AKTVACH"/>
<dbReference type="OrthoDB" id="161814at2759"/>
<dbReference type="Proteomes" id="UP000002530">
    <property type="component" value="Chromosome 3"/>
</dbReference>
<dbReference type="GO" id="GO:0016020">
    <property type="term" value="C:membrane"/>
    <property type="evidence" value="ECO:0007669"/>
    <property type="project" value="UniProtKB-SubCell"/>
</dbReference>
<dbReference type="GO" id="GO:0005375">
    <property type="term" value="F:copper ion transmembrane transporter activity"/>
    <property type="evidence" value="ECO:0007669"/>
    <property type="project" value="InterPro"/>
</dbReference>
<dbReference type="InterPro" id="IPR007274">
    <property type="entry name" value="Cop_transporter"/>
</dbReference>
<dbReference type="PANTHER" id="PTHR12483:SF115">
    <property type="entry name" value="COPPER TRANSPORT PROTEIN"/>
    <property type="match status" value="1"/>
</dbReference>
<dbReference type="PANTHER" id="PTHR12483">
    <property type="entry name" value="SOLUTE CARRIER FAMILY 31 COPPER TRANSPORTERS"/>
    <property type="match status" value="1"/>
</dbReference>
<dbReference type="Pfam" id="PF04145">
    <property type="entry name" value="Ctr"/>
    <property type="match status" value="1"/>
</dbReference>
<keyword id="KW-0186">Copper</keyword>
<keyword id="KW-0187">Copper transport</keyword>
<keyword id="KW-0406">Ion transport</keyword>
<keyword id="KW-0472">Membrane</keyword>
<keyword id="KW-1185">Reference proteome</keyword>
<keyword id="KW-0812">Transmembrane</keyword>
<keyword id="KW-1133">Transmembrane helix</keyword>
<keyword id="KW-0813">Transport</keyword>
<evidence type="ECO:0000255" key="1"/>
<evidence type="ECO:0000256" key="2">
    <source>
        <dbReference type="SAM" id="MobiDB-lite"/>
    </source>
</evidence>
<evidence type="ECO:0000269" key="3">
    <source>
    </source>
</evidence>
<evidence type="ECO:0000303" key="4">
    <source>
    </source>
</evidence>
<evidence type="ECO:0000305" key="5"/>